<comment type="catalytic activity">
    <reaction evidence="1">
        <text>(4aS,6R)-4a-hydroxy-L-erythro-5,6,7,8-tetrahydrobiopterin = (6R)-L-erythro-6,7-dihydrobiopterin + H2O</text>
        <dbReference type="Rhea" id="RHEA:11920"/>
        <dbReference type="ChEBI" id="CHEBI:15377"/>
        <dbReference type="ChEBI" id="CHEBI:15642"/>
        <dbReference type="ChEBI" id="CHEBI:43120"/>
        <dbReference type="EC" id="4.2.1.96"/>
    </reaction>
</comment>
<comment type="similarity">
    <text evidence="1">Belongs to the pterin-4-alpha-carbinolamine dehydratase family.</text>
</comment>
<feature type="chain" id="PRO_1000050424" description="Putative pterin-4-alpha-carbinolamine dehydratase">
    <location>
        <begin position="1"/>
        <end position="94"/>
    </location>
</feature>
<accession>A1UKF3</accession>
<sequence length="94" mass="10609">MAVLTDDQVDAALPELGGWERADGALRRSVKFPAFLDGIEAVRRVAERAEAKDHHPDIDIRWRTVTFVLVTHSEGGITEKDLQMAREIDEILDR</sequence>
<protein>
    <recommendedName>
        <fullName evidence="1">Putative pterin-4-alpha-carbinolamine dehydratase</fullName>
        <shortName evidence="1">PHS</shortName>
        <ecNumber evidence="1">4.2.1.96</ecNumber>
    </recommendedName>
    <alternativeName>
        <fullName evidence="1">4-alpha-hydroxy-tetrahydropterin dehydratase</fullName>
    </alternativeName>
    <alternativeName>
        <fullName evidence="1">Pterin carbinolamine dehydratase</fullName>
        <shortName evidence="1">PCD</shortName>
    </alternativeName>
</protein>
<evidence type="ECO:0000255" key="1">
    <source>
        <dbReference type="HAMAP-Rule" id="MF_00434"/>
    </source>
</evidence>
<reference key="1">
    <citation type="submission" date="2006-12" db="EMBL/GenBank/DDBJ databases">
        <title>Complete sequence of chromosome of Mycobacterium sp. KMS.</title>
        <authorList>
            <consortium name="US DOE Joint Genome Institute"/>
            <person name="Copeland A."/>
            <person name="Lucas S."/>
            <person name="Lapidus A."/>
            <person name="Barry K."/>
            <person name="Detter J.C."/>
            <person name="Glavina del Rio T."/>
            <person name="Hammon N."/>
            <person name="Israni S."/>
            <person name="Dalin E."/>
            <person name="Tice H."/>
            <person name="Pitluck S."/>
            <person name="Kiss H."/>
            <person name="Brettin T."/>
            <person name="Bruce D."/>
            <person name="Han C."/>
            <person name="Tapia R."/>
            <person name="Gilna P."/>
            <person name="Schmutz J."/>
            <person name="Larimer F."/>
            <person name="Land M."/>
            <person name="Hauser L."/>
            <person name="Kyrpides N."/>
            <person name="Mikhailova N."/>
            <person name="Miller C.D."/>
            <person name="Richardson P."/>
        </authorList>
    </citation>
    <scope>NUCLEOTIDE SEQUENCE [LARGE SCALE GENOMIC DNA]</scope>
    <source>
        <strain>KMS</strain>
    </source>
</reference>
<dbReference type="EC" id="4.2.1.96" evidence="1"/>
<dbReference type="EMBL" id="CP000518">
    <property type="protein sequence ID" value="ABL93311.1"/>
    <property type="molecule type" value="Genomic_DNA"/>
</dbReference>
<dbReference type="SMR" id="A1UKF3"/>
<dbReference type="STRING" id="189918.Mkms_4119"/>
<dbReference type="KEGG" id="mkm:Mkms_4119"/>
<dbReference type="HOGENOM" id="CLU_081974_4_3_11"/>
<dbReference type="OrthoDB" id="15077at2"/>
<dbReference type="GO" id="GO:0008124">
    <property type="term" value="F:4-alpha-hydroxytetrahydrobiopterin dehydratase activity"/>
    <property type="evidence" value="ECO:0007669"/>
    <property type="project" value="UniProtKB-UniRule"/>
</dbReference>
<dbReference type="GO" id="GO:0006729">
    <property type="term" value="P:tetrahydrobiopterin biosynthetic process"/>
    <property type="evidence" value="ECO:0007669"/>
    <property type="project" value="InterPro"/>
</dbReference>
<dbReference type="CDD" id="cd00488">
    <property type="entry name" value="PCD_DCoH"/>
    <property type="match status" value="1"/>
</dbReference>
<dbReference type="Gene3D" id="3.30.1360.20">
    <property type="entry name" value="Transcriptional coactivator/pterin dehydratase"/>
    <property type="match status" value="1"/>
</dbReference>
<dbReference type="HAMAP" id="MF_00434">
    <property type="entry name" value="Pterin_4_alpha"/>
    <property type="match status" value="1"/>
</dbReference>
<dbReference type="InterPro" id="IPR036428">
    <property type="entry name" value="PCD_sf"/>
</dbReference>
<dbReference type="InterPro" id="IPR001533">
    <property type="entry name" value="Pterin_deHydtase"/>
</dbReference>
<dbReference type="NCBIfam" id="NF002017">
    <property type="entry name" value="PRK00823.1-2"/>
    <property type="match status" value="1"/>
</dbReference>
<dbReference type="PANTHER" id="PTHR12599">
    <property type="entry name" value="PTERIN-4-ALPHA-CARBINOLAMINE DEHYDRATASE"/>
    <property type="match status" value="1"/>
</dbReference>
<dbReference type="PANTHER" id="PTHR12599:SF0">
    <property type="entry name" value="PTERIN-4-ALPHA-CARBINOLAMINE DEHYDRATASE"/>
    <property type="match status" value="1"/>
</dbReference>
<dbReference type="Pfam" id="PF01329">
    <property type="entry name" value="Pterin_4a"/>
    <property type="match status" value="1"/>
</dbReference>
<dbReference type="SUPFAM" id="SSF55248">
    <property type="entry name" value="PCD-like"/>
    <property type="match status" value="1"/>
</dbReference>
<name>PHS_MYCSK</name>
<organism>
    <name type="scientific">Mycobacterium sp. (strain KMS)</name>
    <dbReference type="NCBI Taxonomy" id="189918"/>
    <lineage>
        <taxon>Bacteria</taxon>
        <taxon>Bacillati</taxon>
        <taxon>Actinomycetota</taxon>
        <taxon>Actinomycetes</taxon>
        <taxon>Mycobacteriales</taxon>
        <taxon>Mycobacteriaceae</taxon>
        <taxon>Mycobacterium</taxon>
    </lineage>
</organism>
<gene>
    <name type="ordered locus">Mkms_4119</name>
</gene>
<keyword id="KW-0456">Lyase</keyword>
<proteinExistence type="inferred from homology"/>